<gene>
    <name evidence="1" type="primary">MBTPS1</name>
    <name evidence="7" type="synonym">S1P</name>
</gene>
<accession>Q9Z2A8</accession>
<accession>G3GRY2</accession>
<comment type="function">
    <text evidence="1 5 6">Serine protease that cleaves after hydrophobic or small residues, provided that Arg or Lys is in position P4: known substrates include SREBF1/SREBP1, SREBF2/SREBP2, BDNF, GNPTAB, ATF6, ATF6B and FAM20C (PubMed:11163209, PubMed:9809072). Cleaves substrates after Arg-Ser-Val-Leu (SREBP2), Arg-His-Leu-Leu (ATF6), Arg-Gly-Leu-Thr (BDNF) and its own propeptide after Arg-Arg-Leu-Leu (PubMed:11163209, PubMed:9809072). Catalyzes the first step in the proteolytic activation of the sterol regulatory element-binding proteins (SREBPs) SREBF1/SREBP1 and SREBF2/SREBP2 (PubMed:9809072). Also mediates the first step in the proteolytic activation of the cyclic AMP-dependent transcription factor ATF-6 (ATF6 and ATF6B) (PubMed:11163209). Mediates the protein cleavage of GNPTAB into subunit alpha and beta, thereby participating in biogenesis of lysosomes (By similarity). Cleaves the propeptide from FAM20C which is required for FAM20C secretion from the Golgi apparatus membrane and for enhancement of FAM20C kinase activity, promoting osteoblast differentiation and biomineralization (By similarity). Involved in the regulation of M6P-dependent Golgi-to-lysosome trafficking of lysosomal enzymes (By similarity). It is required for the activation of CREB3L2/BBF2H7, a transcriptional activator of MIA3/TANGO and other genes controlling mega vesicle formation (By similarity). Therefore, it plays a key role in the regulation of mega vesicle-mediated collagen trafficking (By similarity). In astrocytes and osteoblasts, upon DNA damage and ER stress, mediates the first step of the regulated intramembrane proteolytic activation of the transcription factor CREB3L1, leading to the inhibition of cell-cycle progression (By similarity).</text>
</comment>
<comment type="catalytic activity">
    <reaction evidence="6">
        <text>Processes precursors containing basic and hydrophobic/aliphatic residues at P4 and P2, respectively, with a relatively relaxed acceptance of amino acids at P1 and P3.</text>
        <dbReference type="EC" id="3.4.21.112"/>
    </reaction>
</comment>
<comment type="cofactor">
    <cofactor evidence="1">
        <name>Ca(2+)</name>
        <dbReference type="ChEBI" id="CHEBI:29108"/>
    </cofactor>
</comment>
<comment type="activity regulation">
    <text evidence="1">Inhibited by divalent copper and zinc ions, but not by nickel or cobalt. Inhibited by its prosegment, but not smaller fragments. Inhibited by 4-(2-aminoethyl)benzenesulfonyl fluoride (AEBSF), a serine protease inhibitor.</text>
</comment>
<comment type="subcellular location">
    <subcellularLocation>
        <location evidence="1">Endoplasmic reticulum membrane</location>
        <topology evidence="2">Single-pass type I membrane protein</topology>
    </subcellularLocation>
    <subcellularLocation>
        <location evidence="1">Golgi apparatus membrane</location>
        <topology evidence="2">Single-pass type I membrane protein</topology>
    </subcellularLocation>
    <text evidence="1">May sort to other organelles, including lysosomal and/or endosomal compartments.</text>
</comment>
<comment type="induction">
    <text evidence="6">Down-regulated by sterols.</text>
</comment>
<comment type="PTM">
    <text evidence="1">The 148 kDa zymogen is processed progressively into two membrane-bound 120 and 106 kDa forms in the endoplasmic reticulum, and late into a secreted 98 kDa form. The propeptide is autocatalytically removed through an intramolecular cleavage after Leu-186. Further cleavage generates 14, 10, and 8 kDa intermediates.</text>
</comment>
<comment type="similarity">
    <text evidence="8">Belongs to the peptidase S8 family.</text>
</comment>
<dbReference type="EC" id="3.4.21.112"/>
<dbReference type="EMBL" id="AF078105">
    <property type="protein sequence ID" value="AAC78321.1"/>
    <property type="molecule type" value="mRNA"/>
</dbReference>
<dbReference type="EMBL" id="JH000004">
    <property type="protein sequence ID" value="EGV94126.1"/>
    <property type="molecule type" value="Genomic_DNA"/>
</dbReference>
<dbReference type="PIR" id="T17093">
    <property type="entry name" value="T17093"/>
</dbReference>
<dbReference type="RefSeq" id="NP_001233611.1">
    <property type="nucleotide sequence ID" value="NM_001246682.1"/>
</dbReference>
<dbReference type="SMR" id="Q9Z2A8"/>
<dbReference type="FunCoup" id="Q9Z2A8">
    <property type="interactions" value="1765"/>
</dbReference>
<dbReference type="STRING" id="10029.Q9Z2A8"/>
<dbReference type="MEROPS" id="S08.063"/>
<dbReference type="GlyCosmos" id="Q9Z2A8">
    <property type="glycosylation" value="6 sites, No reported glycans"/>
</dbReference>
<dbReference type="PaxDb" id="10029-NP_001233611.1"/>
<dbReference type="Ensembl" id="ENSCGRT00001029099.1">
    <property type="protein sequence ID" value="ENSCGRP00001024853.1"/>
    <property type="gene ID" value="ENSCGRG00001022644.1"/>
</dbReference>
<dbReference type="GeneID" id="100689417"/>
<dbReference type="KEGG" id="cge:100689417"/>
<dbReference type="CTD" id="8720"/>
<dbReference type="eggNOG" id="KOG4266">
    <property type="taxonomic scope" value="Eukaryota"/>
</dbReference>
<dbReference type="GeneTree" id="ENSGT00490000043404"/>
<dbReference type="InParanoid" id="Q9Z2A8"/>
<dbReference type="OMA" id="LEYTTTG"/>
<dbReference type="OrthoDB" id="1740355at2759"/>
<dbReference type="BRENDA" id="3.4.21.112">
    <property type="organism ID" value="1309"/>
</dbReference>
<dbReference type="Proteomes" id="UP000001075">
    <property type="component" value="Unassembled WGS sequence"/>
</dbReference>
<dbReference type="Proteomes" id="UP000694386">
    <property type="component" value="Unplaced"/>
</dbReference>
<dbReference type="Proteomes" id="UP001108280">
    <property type="component" value="Chromosome 3"/>
</dbReference>
<dbReference type="GO" id="GO:0005789">
    <property type="term" value="C:endoplasmic reticulum membrane"/>
    <property type="evidence" value="ECO:0007669"/>
    <property type="project" value="UniProtKB-SubCell"/>
</dbReference>
<dbReference type="GO" id="GO:0000139">
    <property type="term" value="C:Golgi membrane"/>
    <property type="evidence" value="ECO:0007669"/>
    <property type="project" value="UniProtKB-SubCell"/>
</dbReference>
<dbReference type="GO" id="GO:0005795">
    <property type="term" value="C:Golgi stack"/>
    <property type="evidence" value="ECO:0007669"/>
    <property type="project" value="Ensembl"/>
</dbReference>
<dbReference type="GO" id="GO:0004252">
    <property type="term" value="F:serine-type endopeptidase activity"/>
    <property type="evidence" value="ECO:0000250"/>
    <property type="project" value="UniProtKB"/>
</dbReference>
<dbReference type="GO" id="GO:0008203">
    <property type="term" value="P:cholesterol metabolic process"/>
    <property type="evidence" value="ECO:0007669"/>
    <property type="project" value="UniProtKB-KW"/>
</dbReference>
<dbReference type="GO" id="GO:0007040">
    <property type="term" value="P:lysosome organization"/>
    <property type="evidence" value="ECO:0000250"/>
    <property type="project" value="UniProtKB"/>
</dbReference>
<dbReference type="GO" id="GO:0031293">
    <property type="term" value="P:membrane protein intracellular domain proteolysis"/>
    <property type="evidence" value="ECO:0000315"/>
    <property type="project" value="ParkinsonsUK-UCL"/>
</dbReference>
<dbReference type="GO" id="GO:0007095">
    <property type="term" value="P:mitotic G2 DNA damage checkpoint signaling"/>
    <property type="evidence" value="ECO:0007669"/>
    <property type="project" value="Ensembl"/>
</dbReference>
<dbReference type="GO" id="GO:0006606">
    <property type="term" value="P:protein import into nucleus"/>
    <property type="evidence" value="ECO:0007669"/>
    <property type="project" value="Ensembl"/>
</dbReference>
<dbReference type="GO" id="GO:0016485">
    <property type="term" value="P:protein processing"/>
    <property type="evidence" value="ECO:0000250"/>
    <property type="project" value="UniProtKB"/>
</dbReference>
<dbReference type="GO" id="GO:0006508">
    <property type="term" value="P:proteolysis"/>
    <property type="evidence" value="ECO:0000250"/>
    <property type="project" value="UniProtKB"/>
</dbReference>
<dbReference type="GO" id="GO:0060627">
    <property type="term" value="P:regulation of vesicle-mediated transport"/>
    <property type="evidence" value="ECO:0007669"/>
    <property type="project" value="Ensembl"/>
</dbReference>
<dbReference type="GO" id="GO:0034976">
    <property type="term" value="P:response to endoplasmic reticulum stress"/>
    <property type="evidence" value="ECO:0000315"/>
    <property type="project" value="ParkinsonsUK-UCL"/>
</dbReference>
<dbReference type="CDD" id="cd07479">
    <property type="entry name" value="Peptidases_S8_SKI-1_like"/>
    <property type="match status" value="1"/>
</dbReference>
<dbReference type="FunFam" id="3.40.50.200:FF:000008">
    <property type="entry name" value="Membrane-bound transcription factor site-1 protease preproprotein"/>
    <property type="match status" value="1"/>
</dbReference>
<dbReference type="Gene3D" id="3.40.50.200">
    <property type="entry name" value="Peptidase S8/S53 domain"/>
    <property type="match status" value="1"/>
</dbReference>
<dbReference type="InterPro" id="IPR055143">
    <property type="entry name" value="MBTP1_N"/>
</dbReference>
<dbReference type="InterPro" id="IPR057060">
    <property type="entry name" value="MBTPS1_3rd"/>
</dbReference>
<dbReference type="InterPro" id="IPR057032">
    <property type="entry name" value="MBTPS1_4th"/>
</dbReference>
<dbReference type="InterPro" id="IPR000209">
    <property type="entry name" value="Peptidase_S8/S53_dom"/>
</dbReference>
<dbReference type="InterPro" id="IPR036852">
    <property type="entry name" value="Peptidase_S8/S53_dom_sf"/>
</dbReference>
<dbReference type="InterPro" id="IPR022398">
    <property type="entry name" value="Peptidase_S8_His-AS"/>
</dbReference>
<dbReference type="InterPro" id="IPR023828">
    <property type="entry name" value="Peptidase_S8_Ser-AS"/>
</dbReference>
<dbReference type="InterPro" id="IPR050131">
    <property type="entry name" value="Peptidase_S8_subtilisin-like"/>
</dbReference>
<dbReference type="InterPro" id="IPR015500">
    <property type="entry name" value="Peptidase_S8_subtilisin-rel"/>
</dbReference>
<dbReference type="InterPro" id="IPR034185">
    <property type="entry name" value="Site-1_peptidase_cat_dom"/>
</dbReference>
<dbReference type="PANTHER" id="PTHR43806:SF7">
    <property type="entry name" value="MEMBRANE-BOUND TRANSCRIPTION FACTOR SITE-1 PROTEASE"/>
    <property type="match status" value="1"/>
</dbReference>
<dbReference type="PANTHER" id="PTHR43806">
    <property type="entry name" value="PEPTIDASE S8"/>
    <property type="match status" value="1"/>
</dbReference>
<dbReference type="Pfam" id="PF23001">
    <property type="entry name" value="MBTP1_N"/>
    <property type="match status" value="1"/>
</dbReference>
<dbReference type="Pfam" id="PF23094">
    <property type="entry name" value="MBTPS1_3rd"/>
    <property type="match status" value="1"/>
</dbReference>
<dbReference type="Pfam" id="PF23090">
    <property type="entry name" value="MBTPS1_4th"/>
    <property type="match status" value="1"/>
</dbReference>
<dbReference type="Pfam" id="PF00082">
    <property type="entry name" value="Peptidase_S8"/>
    <property type="match status" value="1"/>
</dbReference>
<dbReference type="PRINTS" id="PR00723">
    <property type="entry name" value="SUBTILISIN"/>
</dbReference>
<dbReference type="SUPFAM" id="SSF52743">
    <property type="entry name" value="Subtilisin-like"/>
    <property type="match status" value="1"/>
</dbReference>
<dbReference type="PROSITE" id="PS51892">
    <property type="entry name" value="SUBTILASE"/>
    <property type="match status" value="1"/>
</dbReference>
<dbReference type="PROSITE" id="PS00137">
    <property type="entry name" value="SUBTILASE_HIS"/>
    <property type="match status" value="1"/>
</dbReference>
<dbReference type="PROSITE" id="PS00138">
    <property type="entry name" value="SUBTILASE_SER"/>
    <property type="match status" value="1"/>
</dbReference>
<evidence type="ECO:0000250" key="1">
    <source>
        <dbReference type="UniProtKB" id="Q14703"/>
    </source>
</evidence>
<evidence type="ECO:0000255" key="2"/>
<evidence type="ECO:0000255" key="3">
    <source>
        <dbReference type="PROSITE-ProRule" id="PRU01240"/>
    </source>
</evidence>
<evidence type="ECO:0000256" key="4">
    <source>
        <dbReference type="SAM" id="MobiDB-lite"/>
    </source>
</evidence>
<evidence type="ECO:0000269" key="5">
    <source>
    </source>
</evidence>
<evidence type="ECO:0000269" key="6">
    <source>
    </source>
</evidence>
<evidence type="ECO:0000303" key="7">
    <source>
    </source>
</evidence>
<evidence type="ECO:0000305" key="8"/>
<keyword id="KW-0068">Autocatalytic cleavage</keyword>
<keyword id="KW-0106">Calcium</keyword>
<keyword id="KW-0153">Cholesterol metabolism</keyword>
<keyword id="KW-0256">Endoplasmic reticulum</keyword>
<keyword id="KW-0325">Glycoprotein</keyword>
<keyword id="KW-0333">Golgi apparatus</keyword>
<keyword id="KW-0378">Hydrolase</keyword>
<keyword id="KW-0443">Lipid metabolism</keyword>
<keyword id="KW-0472">Membrane</keyword>
<keyword id="KW-0597">Phosphoprotein</keyword>
<keyword id="KW-0645">Protease</keyword>
<keyword id="KW-1185">Reference proteome</keyword>
<keyword id="KW-0720">Serine protease</keyword>
<keyword id="KW-0732">Signal</keyword>
<keyword id="KW-0753">Steroid metabolism</keyword>
<keyword id="KW-1207">Sterol metabolism</keyword>
<keyword id="KW-0812">Transmembrane</keyword>
<keyword id="KW-1133">Transmembrane helix</keyword>
<keyword id="KW-0865">Zymogen</keyword>
<protein>
    <recommendedName>
        <fullName evidence="8">Membrane-bound transcription factor site-1 protease</fullName>
        <ecNumber>3.4.21.112</ecNumber>
    </recommendedName>
    <alternativeName>
        <fullName evidence="7">Endopeptidase S1P</fullName>
    </alternativeName>
    <alternativeName>
        <fullName evidence="7">Sterol-regulated luminal protease</fullName>
    </alternativeName>
</protein>
<sequence length="1052" mass="117552">MKLINIWLLLLVVLLCGKKHLGDRLGKKAFEKASCPSCSHLTLKVEFSSTVVEYEYIVAFNGYFTAKARNSFISSALKSSEVDNWRIIPRNNPSSDYPSDFEVIQIKEKQKAGLLTLEDHPNIKRVTPQRKVFRSLKFAESDPIVPCNETRWSQKWQSSRPLRRASLSLGSGFWHATGRHSSRRLLRAIPRQVAQTLQADVLWQMGYTGANVRVAVFDTGLSEKHPHFKNVKERTNWTNERTLDDGLGHGTFVAGVIASMRECQGFAPDAELHIFRVFTNNQVSYTSWFLDAFNYAILKKIDVLNLSIGGPDFMDHPFVDKVWELTANNVIMVSAIGNDGPLYGTLNNPADQMDVIGVGGIDFEDNIARFSSRGMTTWELPGGYGRVKPDIVTYGAGVRGSGVKGGCRALSGTSVASPVVAGAVTLLVSTVQKRELVNPASVKQALIASARRLPGVNMFEQGHGKLDLLRAYQILSSYKPQASLSPSYIDLTECPYMWPYCSQPIYYGGMPTIVNVTILNGMGVTGRIVDKPEWRPYLPQNGDNIEVAFSYSSVLWPWSGYLAISISVTKKAASWEGIAQGHIMITVASPAETEAKNGAEHTSTVKLPIKVKIIPTPPRSKRVLWDQYHNLRYPPGYFPRDNLRMKNDPLDWNGDHVHTNFRDMYQHLRSMGYFVEVLGAPFTCFDATQYGTLLMVDSEEEYFPEEIAKLRRDVDNGLSLVIFSDWYNTSVMRKVKFYDENTRQWWMPDTGGANIPALNELLSVWNMGFSDGLYEGEFALANHDMYYASGCSIAKFPEDGVVITQTFKDQGLEVLKQETAVVENVPILGLYQIPAEGGGRIVLYGDSNCLDDSHRQKDCFWLLDALLQYTSYGVTPPSLSHSGNRQRPPSGAGLAPPERMEGNHLHRYSKVLEAHLGDPKPRPLPACPHLSWAKPQPLNETAPSNLWKHQKLLSIDLDKVVLPNFRSNRPQVRPLSPGESGAWDIPGGIMPGRYNQEVGQTIPVFAFLGAMVALAFFVVQISKAKSRPKRRRPRAKRPQLTQQTHPPRTPSV</sequence>
<reference key="1">
    <citation type="journal article" date="1998" name="Mol. Cell">
        <title>Molecular identification of the sterol-regulated luminal protease that cleaves SREBPs and controls lipid composition of animal cells.</title>
        <authorList>
            <person name="Sakai J."/>
            <person name="Rawson R.B."/>
            <person name="Espenshade P.J."/>
            <person name="Cheng D."/>
            <person name="Seegmiller A.C."/>
            <person name="Goldstein J.L."/>
            <person name="Brown M.S."/>
        </authorList>
    </citation>
    <scope>NUCLEOTIDE SEQUENCE [MRNA]</scope>
    <scope>FUNCTION</scope>
    <scope>CATALYTIC ACTIVITY</scope>
    <scope>INDUCTION</scope>
    <scope>MUTAGENESIS OF ASP-218; HIS-249 AND SER-414</scope>
    <source>
        <tissue>Ovary</tissue>
    </source>
</reference>
<reference key="2">
    <citation type="journal article" date="2011" name="Nat. Biotechnol.">
        <title>The genomic sequence of the Chinese hamster ovary (CHO)-K1 cell line.</title>
        <authorList>
            <person name="Xu X."/>
            <person name="Nagarajan H."/>
            <person name="Lewis N.E."/>
            <person name="Pan S."/>
            <person name="Cai Z."/>
            <person name="Liu X."/>
            <person name="Chen W."/>
            <person name="Xie M."/>
            <person name="Wang W."/>
            <person name="Hammond S."/>
            <person name="Andersen M.R."/>
            <person name="Neff N."/>
            <person name="Passarelli B."/>
            <person name="Koh W."/>
            <person name="Fan H.C."/>
            <person name="Wang J."/>
            <person name="Gui Y."/>
            <person name="Lee K.H."/>
            <person name="Betenbaugh M.J."/>
            <person name="Quake S.R."/>
            <person name="Famili I."/>
            <person name="Palsson B.O."/>
            <person name="Wang J."/>
        </authorList>
    </citation>
    <scope>NUCLEOTIDE SEQUENCE [LARGE SCALE GENOMIC DNA]</scope>
</reference>
<reference key="3">
    <citation type="journal article" date="2000" name="Mol. Cell">
        <title>ER stress induces cleavage of membrane-bound ATF6 by the same proteases that process SREBPs.</title>
        <authorList>
            <person name="Ye J."/>
            <person name="Rawson R.B."/>
            <person name="Komuro R."/>
            <person name="Chen X."/>
            <person name="Dave U.P."/>
            <person name="Prywes R."/>
            <person name="Brown M.S."/>
            <person name="Goldstein J.L."/>
        </authorList>
    </citation>
    <scope>FUNCTION</scope>
</reference>
<feature type="signal peptide" evidence="2">
    <location>
        <begin position="1"/>
        <end position="17"/>
    </location>
</feature>
<feature type="propeptide" id="PRO_0000027049" evidence="2">
    <location>
        <begin position="18"/>
        <end position="186"/>
    </location>
</feature>
<feature type="chain" id="PRO_0000027050" description="Membrane-bound transcription factor site-1 protease">
    <location>
        <begin position="187"/>
        <end position="1052"/>
    </location>
</feature>
<feature type="topological domain" description="Lumenal" evidence="2">
    <location>
        <begin position="187"/>
        <end position="999"/>
    </location>
</feature>
<feature type="transmembrane region" description="Helical" evidence="2">
    <location>
        <begin position="1000"/>
        <end position="1022"/>
    </location>
</feature>
<feature type="topological domain" description="Cytoplasmic" evidence="2">
    <location>
        <begin position="1023"/>
        <end position="1052"/>
    </location>
</feature>
<feature type="domain" description="Peptidase S8" evidence="3">
    <location>
        <begin position="190"/>
        <end position="472"/>
    </location>
</feature>
<feature type="region of interest" description="Disordered" evidence="4">
    <location>
        <begin position="877"/>
        <end position="900"/>
    </location>
</feature>
<feature type="region of interest" description="Disordered" evidence="4">
    <location>
        <begin position="1025"/>
        <end position="1052"/>
    </location>
</feature>
<feature type="compositionally biased region" description="Polar residues" evidence="4">
    <location>
        <begin position="877"/>
        <end position="887"/>
    </location>
</feature>
<feature type="compositionally biased region" description="Basic residues" evidence="4">
    <location>
        <begin position="1025"/>
        <end position="1037"/>
    </location>
</feature>
<feature type="active site" description="Charge relay system" evidence="3">
    <location>
        <position position="218"/>
    </location>
</feature>
<feature type="active site" description="Charge relay system" evidence="3">
    <location>
        <position position="249"/>
    </location>
</feature>
<feature type="active site" description="Charge relay system" evidence="3">
    <location>
        <position position="414"/>
    </location>
</feature>
<feature type="site" description="Cleavage; by autolysis" evidence="1">
    <location>
        <begin position="186"/>
        <end position="187"/>
    </location>
</feature>
<feature type="modified residue" description="Phosphoserine" evidence="1">
    <location>
        <position position="168"/>
    </location>
</feature>
<feature type="glycosylation site" description="N-linked (GlcNAc...) asparagine" evidence="2">
    <location>
        <position position="148"/>
    </location>
</feature>
<feature type="glycosylation site" description="N-linked (GlcNAc...) asparagine" evidence="2">
    <location>
        <position position="236"/>
    </location>
</feature>
<feature type="glycosylation site" description="N-linked (GlcNAc...) asparagine" evidence="2">
    <location>
        <position position="305"/>
    </location>
</feature>
<feature type="glycosylation site" description="N-linked (GlcNAc...) asparagine" evidence="2">
    <location>
        <position position="515"/>
    </location>
</feature>
<feature type="glycosylation site" description="N-linked (GlcNAc...) asparagine" evidence="2">
    <location>
        <position position="728"/>
    </location>
</feature>
<feature type="glycosylation site" description="N-linked (GlcNAc...) asparagine" evidence="2">
    <location>
        <position position="939"/>
    </location>
</feature>
<feature type="mutagenesis site" description="Loss of activity." evidence="6">
    <original>D</original>
    <variation>N</variation>
    <location>
        <position position="218"/>
    </location>
</feature>
<feature type="mutagenesis site" description="Loss of activity." evidence="6">
    <original>H</original>
    <variation>F</variation>
    <location>
        <position position="249"/>
    </location>
</feature>
<feature type="mutagenesis site" description="Loss of activity." evidence="6">
    <original>S</original>
    <variation>A</variation>
    <location>
        <position position="414"/>
    </location>
</feature>
<feature type="sequence conflict" description="In Ref. 1; AAC78321." evidence="8" ref="1">
    <original>T</original>
    <variation>N</variation>
    <location>
        <position position="875"/>
    </location>
</feature>
<name>MBTP1_CRIGR</name>
<proteinExistence type="evidence at protein level"/>
<organism>
    <name type="scientific">Cricetulus griseus</name>
    <name type="common">Chinese hamster</name>
    <name type="synonym">Cricetulus barabensis griseus</name>
    <dbReference type="NCBI Taxonomy" id="10029"/>
    <lineage>
        <taxon>Eukaryota</taxon>
        <taxon>Metazoa</taxon>
        <taxon>Chordata</taxon>
        <taxon>Craniata</taxon>
        <taxon>Vertebrata</taxon>
        <taxon>Euteleostomi</taxon>
        <taxon>Mammalia</taxon>
        <taxon>Eutheria</taxon>
        <taxon>Euarchontoglires</taxon>
        <taxon>Glires</taxon>
        <taxon>Rodentia</taxon>
        <taxon>Myomorpha</taxon>
        <taxon>Muroidea</taxon>
        <taxon>Cricetidae</taxon>
        <taxon>Cricetinae</taxon>
        <taxon>Cricetulus</taxon>
    </lineage>
</organism>